<feature type="chain" id="PRO_0000219395" description="Band 4.1-like protein 1">
    <location>
        <begin position="1"/>
        <end position="881"/>
    </location>
</feature>
<feature type="domain" description="FERM" evidence="3">
    <location>
        <begin position="97"/>
        <end position="378"/>
    </location>
</feature>
<feature type="region of interest" description="Disordered" evidence="4">
    <location>
        <begin position="1"/>
        <end position="88"/>
    </location>
</feature>
<feature type="region of interest" description="Disordered" evidence="4">
    <location>
        <begin position="428"/>
        <end position="501"/>
    </location>
</feature>
<feature type="region of interest" description="Spectrin--actin-binding">
    <location>
        <begin position="483"/>
        <end position="541"/>
    </location>
</feature>
<feature type="region of interest" description="Disordered" evidence="4">
    <location>
        <begin position="514"/>
        <end position="596"/>
    </location>
</feature>
<feature type="region of interest" description="Disordered" evidence="4">
    <location>
        <begin position="642"/>
        <end position="699"/>
    </location>
</feature>
<feature type="region of interest" description="C-terminal (CTD)">
    <location>
        <begin position="746"/>
        <end position="881"/>
    </location>
</feature>
<feature type="compositionally biased region" description="Low complexity" evidence="4">
    <location>
        <begin position="17"/>
        <end position="35"/>
    </location>
</feature>
<feature type="compositionally biased region" description="Basic and acidic residues" evidence="4">
    <location>
        <begin position="38"/>
        <end position="50"/>
    </location>
</feature>
<feature type="compositionally biased region" description="Polar residues" evidence="4">
    <location>
        <begin position="76"/>
        <end position="87"/>
    </location>
</feature>
<feature type="compositionally biased region" description="Basic and acidic residues" evidence="4">
    <location>
        <begin position="444"/>
        <end position="457"/>
    </location>
</feature>
<feature type="compositionally biased region" description="Basic and acidic residues" evidence="4">
    <location>
        <begin position="466"/>
        <end position="501"/>
    </location>
</feature>
<feature type="compositionally biased region" description="Basic and acidic residues" evidence="4">
    <location>
        <begin position="514"/>
        <end position="538"/>
    </location>
</feature>
<feature type="compositionally biased region" description="Basic and acidic residues" evidence="4">
    <location>
        <begin position="550"/>
        <end position="577"/>
    </location>
</feature>
<feature type="modified residue" description="Phosphothreonine" evidence="2">
    <location>
        <position position="30"/>
    </location>
</feature>
<feature type="modified residue" description="Phosphoserine" evidence="11 12 14">
    <location>
        <position position="75"/>
    </location>
</feature>
<feature type="modified residue" description="Phosphothreonine" evidence="11 14">
    <location>
        <position position="79"/>
    </location>
</feature>
<feature type="modified residue" description="Phosphotyrosine" evidence="2">
    <location>
        <position position="343"/>
    </location>
</feature>
<feature type="modified residue" description="Phosphoserine" evidence="14">
    <location>
        <position position="378"/>
    </location>
</feature>
<feature type="modified residue" description="Phosphoserine" evidence="12 14">
    <location>
        <position position="430"/>
    </location>
</feature>
<feature type="modified residue" description="Phosphoserine" evidence="14">
    <location>
        <position position="437"/>
    </location>
</feature>
<feature type="modified residue" description="Phosphoserine" evidence="15">
    <location>
        <position position="461"/>
    </location>
</feature>
<feature type="modified residue" description="Phosphoserine" evidence="1">
    <location>
        <position position="466"/>
    </location>
</feature>
<feature type="modified residue" description="Phosphothreonine" evidence="11 14">
    <location>
        <position position="475"/>
    </location>
</feature>
<feature type="modified residue" description="Phosphoserine" evidence="12 14">
    <location>
        <position position="510"/>
    </location>
</feature>
<feature type="modified residue" description="Phosphoserine" evidence="11">
    <location>
        <position position="540"/>
    </location>
</feature>
<feature type="modified residue" description="Phosphoserine" evidence="11">
    <location>
        <position position="541"/>
    </location>
</feature>
<feature type="modified residue" description="Phosphoserine" evidence="11 12 14">
    <location>
        <position position="544"/>
    </location>
</feature>
<feature type="modified residue" description="Phosphoserine" evidence="11 12 14">
    <location>
        <position position="546"/>
    </location>
</feature>
<feature type="modified residue" description="Phosphothreonine" evidence="14">
    <location>
        <position position="550"/>
    </location>
</feature>
<feature type="modified residue" description="Phosphoserine" evidence="12">
    <location>
        <position position="564"/>
    </location>
</feature>
<feature type="modified residue" description="Phosphoserine" evidence="11 15">
    <location>
        <position position="578"/>
    </location>
</feature>
<feature type="modified residue" description="Phosphothreonine" evidence="1">
    <location>
        <position position="580"/>
    </location>
</feature>
<feature type="modified residue" description="Phosphoserine" evidence="2">
    <location>
        <position position="639"/>
    </location>
</feature>
<feature type="modified residue" description="Phosphoserine" evidence="11 14">
    <location>
        <position position="648"/>
    </location>
</feature>
<feature type="modified residue" description="Phosphoserine" evidence="11 12 14">
    <location>
        <position position="650"/>
    </location>
</feature>
<feature type="modified residue" description="Phosphoserine" evidence="2">
    <location>
        <position position="667"/>
    </location>
</feature>
<feature type="modified residue" description="Phosphoserine" evidence="2">
    <location>
        <position position="672"/>
    </location>
</feature>
<feature type="modified residue" description="Phosphoserine" evidence="14">
    <location>
        <position position="678"/>
    </location>
</feature>
<feature type="modified residue" description="Phosphoserine" evidence="2">
    <location>
        <position position="685"/>
    </location>
</feature>
<feature type="modified residue" description="Phosphothreonine" evidence="2">
    <location>
        <position position="686"/>
    </location>
</feature>
<feature type="modified residue" description="Phosphoserine" evidence="2">
    <location>
        <position position="722"/>
    </location>
</feature>
<feature type="modified residue" description="Phosphoserine" evidence="11 14">
    <location>
        <position position="784"/>
    </location>
</feature>
<feature type="modified residue" description="Phosphoserine" evidence="1">
    <location>
        <position position="870"/>
    </location>
</feature>
<feature type="splice variant" id="VSP_023958" description="In isoform 2 and isoform 3." evidence="8">
    <location>
        <begin position="1"/>
        <end position="62"/>
    </location>
</feature>
<feature type="splice variant" id="VSP_023959" description="In isoform 4." evidence="7">
    <original>MTTETGPDSEVKKAQEEAPQQPEAAAAVTTPVTPAGHGHPEANSNEKHPSQQDTRPAEQ</original>
    <variation>MVFLGRINEVEPAKGLAESLAPTERSVK</variation>
    <location>
        <begin position="1"/>
        <end position="59"/>
    </location>
</feature>
<feature type="splice variant" id="VSP_023960" description="In isoform 3." evidence="9">
    <location>
        <begin position="115"/>
        <end position="149"/>
    </location>
</feature>
<feature type="splice variant" id="VSP_023961" description="In isoform 2, isoform 3 and isoform 4." evidence="7 8">
    <location>
        <begin position="484"/>
        <end position="495"/>
    </location>
</feature>
<feature type="splice variant" id="VSP_023962" description="In isoform 4." evidence="7">
    <location>
        <begin position="556"/>
        <end position="692"/>
    </location>
</feature>
<feature type="splice variant" id="VSP_023963" description="In isoform 2." evidence="8">
    <location>
        <begin position="729"/>
        <end position="756"/>
    </location>
</feature>
<feature type="sequence variant" id="VAR_066600" description="In MRD11; results in a 50% reduction of interaction of 4.1N protein to GRIA1 compared to wild-type; dbSNP:rs1569376434." evidence="6">
    <original>P</original>
    <variation>S</variation>
    <location>
        <position position="854"/>
    </location>
</feature>
<feature type="sequence conflict" description="In Ref. 4; AAH40259 and 5; AAL15446." evidence="9" ref="4 5">
    <location>
        <position position="728"/>
    </location>
</feature>
<feature type="modified residue" description="N-acetylmethionine" evidence="13">
    <location sequence="Q9H4G0-2">
        <position position="1"/>
    </location>
</feature>
<feature type="modified residue" description="N-acetylmethionine" evidence="13">
    <location sequence="Q9H4G0-3">
        <position position="1"/>
    </location>
</feature>
<dbReference type="EMBL" id="AB002336">
    <property type="protein sequence ID" value="BAA20796.1"/>
    <property type="status" value="ALT_INIT"/>
    <property type="molecule type" value="mRNA"/>
</dbReference>
<dbReference type="EMBL" id="AK126875">
    <property type="protein sequence ID" value="BAC86733.1"/>
    <property type="molecule type" value="mRNA"/>
</dbReference>
<dbReference type="EMBL" id="AL121895">
    <property type="status" value="NOT_ANNOTATED_CDS"/>
    <property type="molecule type" value="Genomic_DNA"/>
</dbReference>
<dbReference type="EMBL" id="BC013885">
    <property type="protein sequence ID" value="AAH13885.1"/>
    <property type="molecule type" value="mRNA"/>
</dbReference>
<dbReference type="EMBL" id="BC040259">
    <property type="protein sequence ID" value="AAH40259.1"/>
    <property type="molecule type" value="mRNA"/>
</dbReference>
<dbReference type="EMBL" id="AY049789">
    <property type="protein sequence ID" value="AAL15446.1"/>
    <property type="molecule type" value="mRNA"/>
</dbReference>
<dbReference type="CCDS" id="CCDS13271.1">
    <molecule id="Q9H4G0-1"/>
</dbReference>
<dbReference type="CCDS" id="CCDS13272.1">
    <molecule id="Q9H4G0-2"/>
</dbReference>
<dbReference type="CCDS" id="CCDS58770.1">
    <molecule id="Q9H4G0-4"/>
</dbReference>
<dbReference type="RefSeq" id="NP_001245258.1">
    <property type="nucleotide sequence ID" value="NM_001258329.1"/>
</dbReference>
<dbReference type="RefSeq" id="NP_001245259.1">
    <molecule id="Q9H4G0-4"/>
    <property type="nucleotide sequence ID" value="NM_001258330.1"/>
</dbReference>
<dbReference type="RefSeq" id="NP_001245260.1">
    <molecule id="Q9H4G0-2"/>
    <property type="nucleotide sequence ID" value="NM_001258331.2"/>
</dbReference>
<dbReference type="RefSeq" id="NP_001411319.1">
    <molecule id="Q9H4G0-2"/>
    <property type="nucleotide sequence ID" value="NM_001424390.1"/>
</dbReference>
<dbReference type="RefSeq" id="NP_036288.2">
    <molecule id="Q9H4G0-1"/>
    <property type="nucleotide sequence ID" value="NM_012156.2"/>
</dbReference>
<dbReference type="RefSeq" id="NP_818932.1">
    <molecule id="Q9H4G0-2"/>
    <property type="nucleotide sequence ID" value="NM_177996.2"/>
</dbReference>
<dbReference type="RefSeq" id="XP_016883205.1">
    <property type="nucleotide sequence ID" value="XM_017027716.1"/>
</dbReference>
<dbReference type="RefSeq" id="XP_016883206.1">
    <property type="nucleotide sequence ID" value="XM_017027717.1"/>
</dbReference>
<dbReference type="RefSeq" id="XP_016883208.1">
    <property type="nucleotide sequence ID" value="XM_017027719.1"/>
</dbReference>
<dbReference type="SMR" id="Q9H4G0"/>
<dbReference type="BioGRID" id="108350">
    <property type="interactions" value="186"/>
</dbReference>
<dbReference type="FunCoup" id="Q9H4G0">
    <property type="interactions" value="1119"/>
</dbReference>
<dbReference type="IntAct" id="Q9H4G0">
    <property type="interactions" value="91"/>
</dbReference>
<dbReference type="MINT" id="Q9H4G0"/>
<dbReference type="STRING" id="9606.ENSP00000337168"/>
<dbReference type="GlyCosmos" id="Q9H4G0">
    <property type="glycosylation" value="7 sites, 1 glycan"/>
</dbReference>
<dbReference type="GlyGen" id="Q9H4G0">
    <property type="glycosylation" value="12 sites, 1 O-linked glycan (11 sites)"/>
</dbReference>
<dbReference type="iPTMnet" id="Q9H4G0"/>
<dbReference type="PhosphoSitePlus" id="Q9H4G0"/>
<dbReference type="SwissPalm" id="Q9H4G0"/>
<dbReference type="BioMuta" id="EPB41L1"/>
<dbReference type="DMDM" id="14916561"/>
<dbReference type="jPOST" id="Q9H4G0"/>
<dbReference type="MassIVE" id="Q9H4G0"/>
<dbReference type="PaxDb" id="9606-ENSP00000337168"/>
<dbReference type="PeptideAtlas" id="Q9H4G0"/>
<dbReference type="ProteomicsDB" id="80831">
    <molecule id="Q9H4G0-1"/>
</dbReference>
<dbReference type="ProteomicsDB" id="80832">
    <molecule id="Q9H4G0-2"/>
</dbReference>
<dbReference type="ProteomicsDB" id="80833">
    <molecule id="Q9H4G0-3"/>
</dbReference>
<dbReference type="ProteomicsDB" id="80834">
    <molecule id="Q9H4G0-4"/>
</dbReference>
<dbReference type="Pumba" id="Q9H4G0"/>
<dbReference type="Antibodypedia" id="26438">
    <property type="antibodies" value="96 antibodies from 19 providers"/>
</dbReference>
<dbReference type="DNASU" id="2036"/>
<dbReference type="Ensembl" id="ENST00000202028.9">
    <molecule id="Q9H4G0-2"/>
    <property type="protein sequence ID" value="ENSP00000202028.5"/>
    <property type="gene ID" value="ENSG00000088367.23"/>
</dbReference>
<dbReference type="Ensembl" id="ENST00000338074.7">
    <molecule id="Q9H4G0-1"/>
    <property type="protein sequence ID" value="ENSP00000337168.2"/>
    <property type="gene ID" value="ENSG00000088367.23"/>
</dbReference>
<dbReference type="Ensembl" id="ENST00000373950.6">
    <molecule id="Q9H4G0-3"/>
    <property type="protein sequence ID" value="ENSP00000363061.2"/>
    <property type="gene ID" value="ENSG00000088367.23"/>
</dbReference>
<dbReference type="Ensembl" id="ENST00000441639.5">
    <molecule id="Q9H4G0-2"/>
    <property type="protein sequence ID" value="ENSP00000399214.1"/>
    <property type="gene ID" value="ENSG00000088367.23"/>
</dbReference>
<dbReference type="Ensembl" id="ENST00000628415.2">
    <molecule id="Q9H4G0-4"/>
    <property type="protein sequence ID" value="ENSP00000487049.2"/>
    <property type="gene ID" value="ENSG00000088367.23"/>
</dbReference>
<dbReference type="GeneID" id="2036"/>
<dbReference type="KEGG" id="hsa:2036"/>
<dbReference type="MANE-Select" id="ENST00000338074.7">
    <property type="protein sequence ID" value="ENSP00000337168.2"/>
    <property type="RefSeq nucleotide sequence ID" value="NM_012156.2"/>
    <property type="RefSeq protein sequence ID" value="NP_036288.2"/>
</dbReference>
<dbReference type="UCSC" id="uc002xeu.4">
    <molecule id="Q9H4G0-1"/>
    <property type="organism name" value="human"/>
</dbReference>
<dbReference type="AGR" id="HGNC:3378"/>
<dbReference type="CTD" id="2036"/>
<dbReference type="DisGeNET" id="2036"/>
<dbReference type="GeneCards" id="EPB41L1"/>
<dbReference type="HGNC" id="HGNC:3378">
    <property type="gene designation" value="EPB41L1"/>
</dbReference>
<dbReference type="HPA" id="ENSG00000088367">
    <property type="expression patterns" value="Low tissue specificity"/>
</dbReference>
<dbReference type="MalaCards" id="EPB41L1"/>
<dbReference type="MIM" id="602879">
    <property type="type" value="gene"/>
</dbReference>
<dbReference type="MIM" id="614257">
    <property type="type" value="phenotype"/>
</dbReference>
<dbReference type="neXtProt" id="NX_Q9H4G0"/>
<dbReference type="OpenTargets" id="ENSG00000088367"/>
<dbReference type="Orphanet" id="178469">
    <property type="disease" value="Autosomal dominant non-syndromic intellectual disability"/>
</dbReference>
<dbReference type="PharmGKB" id="PA27811"/>
<dbReference type="VEuPathDB" id="HostDB:ENSG00000088367"/>
<dbReference type="eggNOG" id="KOG3527">
    <property type="taxonomic scope" value="Eukaryota"/>
</dbReference>
<dbReference type="GeneTree" id="ENSGT00940000158442"/>
<dbReference type="InParanoid" id="Q9H4G0"/>
<dbReference type="OrthoDB" id="6589456at2759"/>
<dbReference type="PAN-GO" id="Q9H4G0">
    <property type="GO annotations" value="3 GO annotations based on evolutionary models"/>
</dbReference>
<dbReference type="PhylomeDB" id="Q9H4G0"/>
<dbReference type="TreeFam" id="TF351626"/>
<dbReference type="PathwayCommons" id="Q9H4G0"/>
<dbReference type="Reactome" id="R-HSA-399719">
    <property type="pathway name" value="Trafficking of AMPA receptors"/>
</dbReference>
<dbReference type="Reactome" id="R-HSA-6794361">
    <property type="pathway name" value="Neurexins and neuroligins"/>
</dbReference>
<dbReference type="Reactome" id="R-HSA-9662360">
    <property type="pathway name" value="Sensory processing of sound by inner hair cells of the cochlea"/>
</dbReference>
<dbReference type="Reactome" id="R-HSA-9662361">
    <property type="pathway name" value="Sensory processing of sound by outer hair cells of the cochlea"/>
</dbReference>
<dbReference type="SignaLink" id="Q9H4G0"/>
<dbReference type="BioGRID-ORCS" id="2036">
    <property type="hits" value="17 hits in 1147 CRISPR screens"/>
</dbReference>
<dbReference type="ChiTaRS" id="EPB41L1">
    <property type="organism name" value="human"/>
</dbReference>
<dbReference type="GeneWiki" id="EPB41L1"/>
<dbReference type="GenomeRNAi" id="2036"/>
<dbReference type="Pharos" id="Q9H4G0">
    <property type="development level" value="Tbio"/>
</dbReference>
<dbReference type="PRO" id="PR:Q9H4G0"/>
<dbReference type="Proteomes" id="UP000005640">
    <property type="component" value="Chromosome 20"/>
</dbReference>
<dbReference type="RNAct" id="Q9H4G0">
    <property type="molecule type" value="protein"/>
</dbReference>
<dbReference type="Bgee" id="ENSG00000088367">
    <property type="expression patterns" value="Expressed in superior vestibular nucleus and 192 other cell types or tissues"/>
</dbReference>
<dbReference type="ExpressionAtlas" id="Q9H4G0">
    <property type="expression patterns" value="baseline and differential"/>
</dbReference>
<dbReference type="GO" id="GO:0005856">
    <property type="term" value="C:cytoskeleton"/>
    <property type="evidence" value="ECO:0000318"/>
    <property type="project" value="GO_Central"/>
</dbReference>
<dbReference type="GO" id="GO:0005829">
    <property type="term" value="C:cytosol"/>
    <property type="evidence" value="ECO:0000304"/>
    <property type="project" value="Reactome"/>
</dbReference>
<dbReference type="GO" id="GO:0005886">
    <property type="term" value="C:plasma membrane"/>
    <property type="evidence" value="ECO:0000314"/>
    <property type="project" value="HPA"/>
</dbReference>
<dbReference type="GO" id="GO:0003779">
    <property type="term" value="F:actin binding"/>
    <property type="evidence" value="ECO:0007669"/>
    <property type="project" value="UniProtKB-KW"/>
</dbReference>
<dbReference type="GO" id="GO:0005198">
    <property type="term" value="F:structural molecule activity"/>
    <property type="evidence" value="ECO:0007669"/>
    <property type="project" value="InterPro"/>
</dbReference>
<dbReference type="GO" id="GO:0031032">
    <property type="term" value="P:actomyosin structure organization"/>
    <property type="evidence" value="ECO:0000318"/>
    <property type="project" value="GO_Central"/>
</dbReference>
<dbReference type="GO" id="GO:0030866">
    <property type="term" value="P:cortical actin cytoskeleton organization"/>
    <property type="evidence" value="ECO:0007669"/>
    <property type="project" value="InterPro"/>
</dbReference>
<dbReference type="CDD" id="cd14473">
    <property type="entry name" value="FERM_B-lobe"/>
    <property type="match status" value="1"/>
</dbReference>
<dbReference type="CDD" id="cd13184">
    <property type="entry name" value="FERM_C_4_1_family"/>
    <property type="match status" value="1"/>
</dbReference>
<dbReference type="CDD" id="cd17201">
    <property type="entry name" value="FERM_F1_EPB41L1"/>
    <property type="match status" value="1"/>
</dbReference>
<dbReference type="FunFam" id="1.20.80.10:FF:000001">
    <property type="entry name" value="Erythrocyte membrane protein band 4.1"/>
    <property type="match status" value="1"/>
</dbReference>
<dbReference type="FunFam" id="2.30.29.30:FF:000001">
    <property type="entry name" value="Erythrocyte membrane protein band 4.1"/>
    <property type="match status" value="1"/>
</dbReference>
<dbReference type="FunFam" id="3.10.20.90:FF:000002">
    <property type="entry name" value="Erythrocyte protein band 4.1-like 3"/>
    <property type="match status" value="1"/>
</dbReference>
<dbReference type="Gene3D" id="1.20.80.10">
    <property type="match status" value="1"/>
</dbReference>
<dbReference type="Gene3D" id="3.10.20.90">
    <property type="entry name" value="Phosphatidylinositol 3-kinase Catalytic Subunit, Chain A, domain 1"/>
    <property type="match status" value="1"/>
</dbReference>
<dbReference type="Gene3D" id="2.30.29.30">
    <property type="entry name" value="Pleckstrin-homology domain (PH domain)/Phosphotyrosine-binding domain (PTB)"/>
    <property type="match status" value="1"/>
</dbReference>
<dbReference type="InterPro" id="IPR008379">
    <property type="entry name" value="Band_4.1_C"/>
</dbReference>
<dbReference type="InterPro" id="IPR019749">
    <property type="entry name" value="Band_41_domain"/>
</dbReference>
<dbReference type="InterPro" id="IPR000798">
    <property type="entry name" value="Ez/rad/moesin-like"/>
</dbReference>
<dbReference type="InterPro" id="IPR014847">
    <property type="entry name" value="FA"/>
</dbReference>
<dbReference type="InterPro" id="IPR014352">
    <property type="entry name" value="FERM/acyl-CoA-bd_prot_sf"/>
</dbReference>
<dbReference type="InterPro" id="IPR035963">
    <property type="entry name" value="FERM_2"/>
</dbReference>
<dbReference type="InterPro" id="IPR019748">
    <property type="entry name" value="FERM_central"/>
</dbReference>
<dbReference type="InterPro" id="IPR019747">
    <property type="entry name" value="FERM_CS"/>
</dbReference>
<dbReference type="InterPro" id="IPR000299">
    <property type="entry name" value="FERM_domain"/>
</dbReference>
<dbReference type="InterPro" id="IPR018979">
    <property type="entry name" value="FERM_N"/>
</dbReference>
<dbReference type="InterPro" id="IPR018980">
    <property type="entry name" value="FERM_PH-like_C"/>
</dbReference>
<dbReference type="InterPro" id="IPR011993">
    <property type="entry name" value="PH-like_dom_sf"/>
</dbReference>
<dbReference type="InterPro" id="IPR007477">
    <property type="entry name" value="SAB_dom"/>
</dbReference>
<dbReference type="InterPro" id="IPR029071">
    <property type="entry name" value="Ubiquitin-like_domsf"/>
</dbReference>
<dbReference type="PANTHER" id="PTHR23280">
    <property type="entry name" value="4.1 G PROTEIN"/>
    <property type="match status" value="1"/>
</dbReference>
<dbReference type="PANTHER" id="PTHR23280:SF24">
    <property type="entry name" value="BAND 4.1-LIKE PROTEIN 1"/>
    <property type="match status" value="1"/>
</dbReference>
<dbReference type="Pfam" id="PF05902">
    <property type="entry name" value="4_1_CTD"/>
    <property type="match status" value="1"/>
</dbReference>
<dbReference type="Pfam" id="PF08736">
    <property type="entry name" value="FA"/>
    <property type="match status" value="1"/>
</dbReference>
<dbReference type="Pfam" id="PF09380">
    <property type="entry name" value="FERM_C"/>
    <property type="match status" value="1"/>
</dbReference>
<dbReference type="Pfam" id="PF00373">
    <property type="entry name" value="FERM_M"/>
    <property type="match status" value="1"/>
</dbReference>
<dbReference type="Pfam" id="PF09379">
    <property type="entry name" value="FERM_N"/>
    <property type="match status" value="1"/>
</dbReference>
<dbReference type="Pfam" id="PF04382">
    <property type="entry name" value="SAB"/>
    <property type="match status" value="1"/>
</dbReference>
<dbReference type="PIRSF" id="PIRSF002304">
    <property type="entry name" value="Membrane_skeletal_4_1"/>
    <property type="match status" value="1"/>
</dbReference>
<dbReference type="PRINTS" id="PR00935">
    <property type="entry name" value="BAND41"/>
</dbReference>
<dbReference type="PRINTS" id="PR00661">
    <property type="entry name" value="ERMFAMILY"/>
</dbReference>
<dbReference type="SMART" id="SM00295">
    <property type="entry name" value="B41"/>
    <property type="match status" value="1"/>
</dbReference>
<dbReference type="SMART" id="SM01195">
    <property type="entry name" value="FA"/>
    <property type="match status" value="1"/>
</dbReference>
<dbReference type="SMART" id="SM01196">
    <property type="entry name" value="FERM_C"/>
    <property type="match status" value="1"/>
</dbReference>
<dbReference type="SUPFAM" id="SSF50729">
    <property type="entry name" value="PH domain-like"/>
    <property type="match status" value="1"/>
</dbReference>
<dbReference type="SUPFAM" id="SSF47031">
    <property type="entry name" value="Second domain of FERM"/>
    <property type="match status" value="1"/>
</dbReference>
<dbReference type="SUPFAM" id="SSF54236">
    <property type="entry name" value="Ubiquitin-like"/>
    <property type="match status" value="1"/>
</dbReference>
<dbReference type="PROSITE" id="PS00660">
    <property type="entry name" value="FERM_1"/>
    <property type="match status" value="1"/>
</dbReference>
<dbReference type="PROSITE" id="PS00661">
    <property type="entry name" value="FERM_2"/>
    <property type="match status" value="1"/>
</dbReference>
<dbReference type="PROSITE" id="PS50057">
    <property type="entry name" value="FERM_3"/>
    <property type="match status" value="1"/>
</dbReference>
<protein>
    <recommendedName>
        <fullName>Band 4.1-like protein 1</fullName>
    </recommendedName>
    <alternativeName>
        <fullName evidence="10">Erythrocyte membrane protein band 4.1-like 1</fullName>
    </alternativeName>
    <alternativeName>
        <fullName>Neuronal protein 4.1</fullName>
        <shortName>4.1N</shortName>
    </alternativeName>
</protein>
<evidence type="ECO:0000250" key="1">
    <source>
        <dbReference type="UniProtKB" id="Q9WTP0"/>
    </source>
</evidence>
<evidence type="ECO:0000250" key="2">
    <source>
        <dbReference type="UniProtKB" id="Q9Z2H5"/>
    </source>
</evidence>
<evidence type="ECO:0000255" key="3">
    <source>
        <dbReference type="PROSITE-ProRule" id="PRU00084"/>
    </source>
</evidence>
<evidence type="ECO:0000256" key="4">
    <source>
        <dbReference type="SAM" id="MobiDB-lite"/>
    </source>
</evidence>
<evidence type="ECO:0000269" key="5">
    <source>
    </source>
</evidence>
<evidence type="ECO:0000269" key="6">
    <source>
    </source>
</evidence>
<evidence type="ECO:0000303" key="7">
    <source>
    </source>
</evidence>
<evidence type="ECO:0000303" key="8">
    <source>
    </source>
</evidence>
<evidence type="ECO:0000305" key="9"/>
<evidence type="ECO:0000312" key="10">
    <source>
        <dbReference type="HGNC" id="HGNC:3378"/>
    </source>
</evidence>
<evidence type="ECO:0007744" key="11">
    <source>
    </source>
</evidence>
<evidence type="ECO:0007744" key="12">
    <source>
    </source>
</evidence>
<evidence type="ECO:0007744" key="13">
    <source>
    </source>
</evidence>
<evidence type="ECO:0007744" key="14">
    <source>
    </source>
</evidence>
<evidence type="ECO:0007744" key="15">
    <source>
    </source>
</evidence>
<comment type="function">
    <text>May function to confer stability and plasticity to neuronal membrane via multiple interactions, including the spectrin-actin-based cytoskeleton, integral membrane channels and membrane-associated guanylate kinases.</text>
</comment>
<comment type="subunit">
    <text evidence="5">Interacts with AGAP2.</text>
</comment>
<comment type="interaction">
    <interactant intactId="EBI-465536">
        <id>Q9H4G0</id>
    </interactant>
    <interactant intactId="EBI-710997">
        <id>P54274</id>
        <label>TERF1</label>
    </interactant>
    <organismsDiffer>false</organismsDiffer>
    <experiments>2</experiments>
</comment>
<comment type="subcellular location">
    <subcellularLocation>
        <location>Cytoplasm</location>
        <location>Cytoskeleton</location>
    </subcellularLocation>
</comment>
<comment type="alternative products">
    <event type="alternative splicing"/>
    <isoform>
        <id>Q9H4G0-1</id>
        <name>1</name>
        <sequence type="displayed"/>
    </isoform>
    <isoform>
        <id>Q9H4G0-2</id>
        <name>2</name>
        <sequence type="described" ref="VSP_023958 VSP_023961 VSP_023963"/>
    </isoform>
    <isoform>
        <id>Q9H4G0-3</id>
        <name>3</name>
        <sequence type="described" ref="VSP_023958 VSP_023960 VSP_023961"/>
    </isoform>
    <isoform>
        <id>Q9H4G0-4</id>
        <name>4</name>
        <sequence type="described" ref="VSP_023959 VSP_023961 VSP_023962"/>
    </isoform>
</comment>
<comment type="tissue specificity">
    <text>Highest expression in brain, lower in heart, kidney, pancreas, placenta, lung and skeletal muscle.</text>
</comment>
<comment type="disease" evidence="6">
    <disease id="DI-03254">
        <name>Intellectual developmental disorder, autosomal dominant 11</name>
        <acronym>MRD11</acronym>
        <description>A disorder characterized by significantly below average general intellectual functioning associated with impairments in adaptive behavior and manifested during the developmental period.</description>
        <dbReference type="MIM" id="614257"/>
    </disease>
    <text>The disease is caused by variants affecting the gene represented in this entry.</text>
</comment>
<comment type="sequence caution" evidence="9">
    <conflict type="erroneous initiation">
        <sequence resource="EMBL-CDS" id="BAA20796"/>
    </conflict>
    <text>Extended N-terminus.</text>
</comment>
<gene>
    <name evidence="10" type="primary">EPB41L1</name>
    <name evidence="10" type="synonym">KIAA0338</name>
</gene>
<proteinExistence type="evidence at protein level"/>
<keyword id="KW-0007">Acetylation</keyword>
<keyword id="KW-0009">Actin-binding</keyword>
<keyword id="KW-0025">Alternative splicing</keyword>
<keyword id="KW-0963">Cytoplasm</keyword>
<keyword id="KW-0206">Cytoskeleton</keyword>
<keyword id="KW-0225">Disease variant</keyword>
<keyword id="KW-0991">Intellectual disability</keyword>
<keyword id="KW-0597">Phosphoprotein</keyword>
<keyword id="KW-1267">Proteomics identification</keyword>
<keyword id="KW-1185">Reference proteome</keyword>
<sequence length="881" mass="98503">MTTETGPDSEVKKAQEEAPQQPEAAAAVTTPVTPAGHGHPEANSNEKHPSQQDTRPAEQSLDMEEKDYSEADGLSERTTPSKAQKSPQKIAKKYKSAICRVTLLDASEYECEVEKHGRGQVLFDLVCEHLNLLEKDYFGLTFCDADSQKNWLDPSKEIKKQIRSSPWNFAFTVKFYPPDPAQLTEDITRYYLCLQLRADIITGRLPCSFVTHALLGSYAVQAELGDYDAEEHVGNYVSELRFAPNQTRELEERIMELHKTYRGMTPGEAEIHFLENAKKLSMYGVDLHHAKDSEGIDIMLGVCANGLLIYRDRLRINRFAWPKILKISYKRSNFYIKIRPGEYEQFESTIGFKLPNHRSAKRLWKVCIEHHTFFRLVSPEPPPKGFLVMGSKFRYSGRTQAQTRQASALIDRPAPFFERSSSKRYTMSRSLDGAEFSRPASVSENHDAGPDGDKRDEDGESGGQRSEAEEGEVRTPTKIKELKPEQETTPRHKQEFLDKPEDVLLKHQASINELKRTLKEPNSKLIHRDRDWERERRLPSSPASPSPKGTPEKANERAGLREGSEEKVKPPRPRAPESDTGDEDQDQERDTVFLKDNHLAIERKCSSITVSSTSSLEAEVDFTVIGDYHGSAFEDFSRSLPELDRDKSDSDTEGLLFSRDLNKGAPSQDDESGGIEDSPDRGACSTPDMPQFEPVKTETMTVSSLAIRKKIEPEAVLQTRVSAMDNTQQVDGSASVGREFIATTPSITTETISTTMENSLKSGKGAAAMIPGPQTVATEIRSLSPIIGKDVLTSTYGATAETLSTSTTTHVTKTVKGGFSETRIEKRIIITGDEDVDQDQALALAIKEAKLQHPDMLVTKAVVYRETDPSPEERDKKPQES</sequence>
<accession>Q9H4G0</accession>
<accession>O15046</accession>
<accession>Q4VXM6</accession>
<accession>Q4VXM7</accession>
<accession>Q4VXM8</accession>
<accession>Q4VXN4</accession>
<accession>Q6ZT61</accession>
<accession>Q8IUU7</accession>
<accession>Q96CV5</accession>
<accession>Q96L65</accession>
<organism>
    <name type="scientific">Homo sapiens</name>
    <name type="common">Human</name>
    <dbReference type="NCBI Taxonomy" id="9606"/>
    <lineage>
        <taxon>Eukaryota</taxon>
        <taxon>Metazoa</taxon>
        <taxon>Chordata</taxon>
        <taxon>Craniata</taxon>
        <taxon>Vertebrata</taxon>
        <taxon>Euteleostomi</taxon>
        <taxon>Mammalia</taxon>
        <taxon>Eutheria</taxon>
        <taxon>Euarchontoglires</taxon>
        <taxon>Primates</taxon>
        <taxon>Haplorrhini</taxon>
        <taxon>Catarrhini</taxon>
        <taxon>Hominidae</taxon>
        <taxon>Homo</taxon>
    </lineage>
</organism>
<name>E41L1_HUMAN</name>
<reference key="1">
    <citation type="journal article" date="1997" name="DNA Res.">
        <title>Prediction of the coding sequences of unidentified human genes. VII. The complete sequences of 100 new cDNA clones from brain which can code for large proteins in vitro.</title>
        <authorList>
            <person name="Nagase T."/>
            <person name="Ishikawa K."/>
            <person name="Nakajima D."/>
            <person name="Ohira M."/>
            <person name="Seki N."/>
            <person name="Miyajima N."/>
            <person name="Tanaka A."/>
            <person name="Kotani H."/>
            <person name="Nomura N."/>
            <person name="Ohara O."/>
        </authorList>
    </citation>
    <scope>NUCLEOTIDE SEQUENCE [LARGE SCALE MRNA] (ISOFORM 1)</scope>
    <source>
        <tissue>Brain</tissue>
    </source>
</reference>
<reference key="2">
    <citation type="journal article" date="2004" name="Nat. Genet.">
        <title>Complete sequencing and characterization of 21,243 full-length human cDNAs.</title>
        <authorList>
            <person name="Ota T."/>
            <person name="Suzuki Y."/>
            <person name="Nishikawa T."/>
            <person name="Otsuki T."/>
            <person name="Sugiyama T."/>
            <person name="Irie R."/>
            <person name="Wakamatsu A."/>
            <person name="Hayashi K."/>
            <person name="Sato H."/>
            <person name="Nagai K."/>
            <person name="Kimura K."/>
            <person name="Makita H."/>
            <person name="Sekine M."/>
            <person name="Obayashi M."/>
            <person name="Nishi T."/>
            <person name="Shibahara T."/>
            <person name="Tanaka T."/>
            <person name="Ishii S."/>
            <person name="Yamamoto J."/>
            <person name="Saito K."/>
            <person name="Kawai Y."/>
            <person name="Isono Y."/>
            <person name="Nakamura Y."/>
            <person name="Nagahari K."/>
            <person name="Murakami K."/>
            <person name="Yasuda T."/>
            <person name="Iwayanagi T."/>
            <person name="Wagatsuma M."/>
            <person name="Shiratori A."/>
            <person name="Sudo H."/>
            <person name="Hosoiri T."/>
            <person name="Kaku Y."/>
            <person name="Kodaira H."/>
            <person name="Kondo H."/>
            <person name="Sugawara M."/>
            <person name="Takahashi M."/>
            <person name="Kanda K."/>
            <person name="Yokoi T."/>
            <person name="Furuya T."/>
            <person name="Kikkawa E."/>
            <person name="Omura Y."/>
            <person name="Abe K."/>
            <person name="Kamihara K."/>
            <person name="Katsuta N."/>
            <person name="Sato K."/>
            <person name="Tanikawa M."/>
            <person name="Yamazaki M."/>
            <person name="Ninomiya K."/>
            <person name="Ishibashi T."/>
            <person name="Yamashita H."/>
            <person name="Murakawa K."/>
            <person name="Fujimori K."/>
            <person name="Tanai H."/>
            <person name="Kimata M."/>
            <person name="Watanabe M."/>
            <person name="Hiraoka S."/>
            <person name="Chiba Y."/>
            <person name="Ishida S."/>
            <person name="Ono Y."/>
            <person name="Takiguchi S."/>
            <person name="Watanabe S."/>
            <person name="Yosida M."/>
            <person name="Hotuta T."/>
            <person name="Kusano J."/>
            <person name="Kanehori K."/>
            <person name="Takahashi-Fujii A."/>
            <person name="Hara H."/>
            <person name="Tanase T.-O."/>
            <person name="Nomura Y."/>
            <person name="Togiya S."/>
            <person name="Komai F."/>
            <person name="Hara R."/>
            <person name="Takeuchi K."/>
            <person name="Arita M."/>
            <person name="Imose N."/>
            <person name="Musashino K."/>
            <person name="Yuuki H."/>
            <person name="Oshima A."/>
            <person name="Sasaki N."/>
            <person name="Aotsuka S."/>
            <person name="Yoshikawa Y."/>
            <person name="Matsunawa H."/>
            <person name="Ichihara T."/>
            <person name="Shiohata N."/>
            <person name="Sano S."/>
            <person name="Moriya S."/>
            <person name="Momiyama H."/>
            <person name="Satoh N."/>
            <person name="Takami S."/>
            <person name="Terashima Y."/>
            <person name="Suzuki O."/>
            <person name="Nakagawa S."/>
            <person name="Senoh A."/>
            <person name="Mizoguchi H."/>
            <person name="Goto Y."/>
            <person name="Shimizu F."/>
            <person name="Wakebe H."/>
            <person name="Hishigaki H."/>
            <person name="Watanabe T."/>
            <person name="Sugiyama A."/>
            <person name="Takemoto M."/>
            <person name="Kawakami B."/>
            <person name="Yamazaki M."/>
            <person name="Watanabe K."/>
            <person name="Kumagai A."/>
            <person name="Itakura S."/>
            <person name="Fukuzumi Y."/>
            <person name="Fujimori Y."/>
            <person name="Komiyama M."/>
            <person name="Tashiro H."/>
            <person name="Tanigami A."/>
            <person name="Fujiwara T."/>
            <person name="Ono T."/>
            <person name="Yamada K."/>
            <person name="Fujii Y."/>
            <person name="Ozaki K."/>
            <person name="Hirao M."/>
            <person name="Ohmori Y."/>
            <person name="Kawabata A."/>
            <person name="Hikiji T."/>
            <person name="Kobatake N."/>
            <person name="Inagaki H."/>
            <person name="Ikema Y."/>
            <person name="Okamoto S."/>
            <person name="Okitani R."/>
            <person name="Kawakami T."/>
            <person name="Noguchi S."/>
            <person name="Itoh T."/>
            <person name="Shigeta K."/>
            <person name="Senba T."/>
            <person name="Matsumura K."/>
            <person name="Nakajima Y."/>
            <person name="Mizuno T."/>
            <person name="Morinaga M."/>
            <person name="Sasaki M."/>
            <person name="Togashi T."/>
            <person name="Oyama M."/>
            <person name="Hata H."/>
            <person name="Watanabe M."/>
            <person name="Komatsu T."/>
            <person name="Mizushima-Sugano J."/>
            <person name="Satoh T."/>
            <person name="Shirai Y."/>
            <person name="Takahashi Y."/>
            <person name="Nakagawa K."/>
            <person name="Okumura K."/>
            <person name="Nagase T."/>
            <person name="Nomura N."/>
            <person name="Kikuchi H."/>
            <person name="Masuho Y."/>
            <person name="Yamashita R."/>
            <person name="Nakai K."/>
            <person name="Yada T."/>
            <person name="Nakamura Y."/>
            <person name="Ohara O."/>
            <person name="Isogai T."/>
            <person name="Sugano S."/>
        </authorList>
    </citation>
    <scope>NUCLEOTIDE SEQUENCE [LARGE SCALE MRNA] (ISOFORM 4)</scope>
    <source>
        <tissue>Amygdala</tissue>
    </source>
</reference>
<reference key="3">
    <citation type="journal article" date="2001" name="Nature">
        <title>The DNA sequence and comparative analysis of human chromosome 20.</title>
        <authorList>
            <person name="Deloukas P."/>
            <person name="Matthews L.H."/>
            <person name="Ashurst J.L."/>
            <person name="Burton J."/>
            <person name="Gilbert J.G.R."/>
            <person name="Jones M."/>
            <person name="Stavrides G."/>
            <person name="Almeida J.P."/>
            <person name="Babbage A.K."/>
            <person name="Bagguley C.L."/>
            <person name="Bailey J."/>
            <person name="Barlow K.F."/>
            <person name="Bates K.N."/>
            <person name="Beard L.M."/>
            <person name="Beare D.M."/>
            <person name="Beasley O.P."/>
            <person name="Bird C.P."/>
            <person name="Blakey S.E."/>
            <person name="Bridgeman A.M."/>
            <person name="Brown A.J."/>
            <person name="Buck D."/>
            <person name="Burrill W.D."/>
            <person name="Butler A.P."/>
            <person name="Carder C."/>
            <person name="Carter N.P."/>
            <person name="Chapman J.C."/>
            <person name="Clamp M."/>
            <person name="Clark G."/>
            <person name="Clark L.N."/>
            <person name="Clark S.Y."/>
            <person name="Clee C.M."/>
            <person name="Clegg S."/>
            <person name="Cobley V.E."/>
            <person name="Collier R.E."/>
            <person name="Connor R.E."/>
            <person name="Corby N.R."/>
            <person name="Coulson A."/>
            <person name="Coville G.J."/>
            <person name="Deadman R."/>
            <person name="Dhami P.D."/>
            <person name="Dunn M."/>
            <person name="Ellington A.G."/>
            <person name="Frankland J.A."/>
            <person name="Fraser A."/>
            <person name="French L."/>
            <person name="Garner P."/>
            <person name="Grafham D.V."/>
            <person name="Griffiths C."/>
            <person name="Griffiths M.N.D."/>
            <person name="Gwilliam R."/>
            <person name="Hall R.E."/>
            <person name="Hammond S."/>
            <person name="Harley J.L."/>
            <person name="Heath P.D."/>
            <person name="Ho S."/>
            <person name="Holden J.L."/>
            <person name="Howden P.J."/>
            <person name="Huckle E."/>
            <person name="Hunt A.R."/>
            <person name="Hunt S.E."/>
            <person name="Jekosch K."/>
            <person name="Johnson C.M."/>
            <person name="Johnson D."/>
            <person name="Kay M.P."/>
            <person name="Kimberley A.M."/>
            <person name="King A."/>
            <person name="Knights A."/>
            <person name="Laird G.K."/>
            <person name="Lawlor S."/>
            <person name="Lehvaeslaiho M.H."/>
            <person name="Leversha M.A."/>
            <person name="Lloyd C."/>
            <person name="Lloyd D.M."/>
            <person name="Lovell J.D."/>
            <person name="Marsh V.L."/>
            <person name="Martin S.L."/>
            <person name="McConnachie L.J."/>
            <person name="McLay K."/>
            <person name="McMurray A.A."/>
            <person name="Milne S.A."/>
            <person name="Mistry D."/>
            <person name="Moore M.J.F."/>
            <person name="Mullikin J.C."/>
            <person name="Nickerson T."/>
            <person name="Oliver K."/>
            <person name="Parker A."/>
            <person name="Patel R."/>
            <person name="Pearce T.A.V."/>
            <person name="Peck A.I."/>
            <person name="Phillimore B.J.C.T."/>
            <person name="Prathalingam S.R."/>
            <person name="Plumb R.W."/>
            <person name="Ramsay H."/>
            <person name="Rice C.M."/>
            <person name="Ross M.T."/>
            <person name="Scott C.E."/>
            <person name="Sehra H.K."/>
            <person name="Shownkeen R."/>
            <person name="Sims S."/>
            <person name="Skuce C.D."/>
            <person name="Smith M.L."/>
            <person name="Soderlund C."/>
            <person name="Steward C.A."/>
            <person name="Sulston J.E."/>
            <person name="Swann R.M."/>
            <person name="Sycamore N."/>
            <person name="Taylor R."/>
            <person name="Tee L."/>
            <person name="Thomas D.W."/>
            <person name="Thorpe A."/>
            <person name="Tracey A."/>
            <person name="Tromans A.C."/>
            <person name="Vaudin M."/>
            <person name="Wall M."/>
            <person name="Wallis J.M."/>
            <person name="Whitehead S.L."/>
            <person name="Whittaker P."/>
            <person name="Willey D.L."/>
            <person name="Williams L."/>
            <person name="Williams S.A."/>
            <person name="Wilming L."/>
            <person name="Wray P.W."/>
            <person name="Hubbard T."/>
            <person name="Durbin R.M."/>
            <person name="Bentley D.R."/>
            <person name="Beck S."/>
            <person name="Rogers J."/>
        </authorList>
    </citation>
    <scope>NUCLEOTIDE SEQUENCE [LARGE SCALE GENOMIC DNA]</scope>
</reference>
<reference key="4">
    <citation type="journal article" date="2004" name="Genome Res.">
        <title>The status, quality, and expansion of the NIH full-length cDNA project: the Mammalian Gene Collection (MGC).</title>
        <authorList>
            <consortium name="The MGC Project Team"/>
        </authorList>
    </citation>
    <scope>NUCLEOTIDE SEQUENCE [LARGE SCALE MRNA] (ISOFORMS 1 AND 2)</scope>
    <source>
        <tissue>Brain</tissue>
        <tissue>Pancreas</tissue>
    </source>
</reference>
<reference key="5">
    <citation type="submission" date="2001-07" db="EMBL/GenBank/DDBJ databases">
        <authorList>
            <person name="Liu J."/>
            <person name="Zhou Y."/>
            <person name="Zhang B."/>
            <person name="Peng X."/>
            <person name="Yuan J."/>
            <person name="Qiang B."/>
        </authorList>
    </citation>
    <scope>NUCLEOTIDE SEQUENCE [MRNA] OF 1-873 (ISOFORM 1)</scope>
</reference>
<reference key="6">
    <citation type="journal article" date="2000" name="Cell">
        <title>PIKE: a nuclear GTPase that enhances PI3kinase activity and is regulated by protein 4.1N.</title>
        <authorList>
            <person name="Ye K."/>
            <person name="Hurt K.J."/>
            <person name="Wu F.Y."/>
            <person name="Fang M."/>
            <person name="Luo H.R."/>
            <person name="Hong J.J."/>
            <person name="Blackshaw S."/>
            <person name="Ferris C.D."/>
            <person name="Snyder S.H."/>
        </authorList>
    </citation>
    <scope>INTERACTION WITH AGAP2</scope>
</reference>
<reference key="7">
    <citation type="journal article" date="2006" name="Cell">
        <title>Global, in vivo, and site-specific phosphorylation dynamics in signaling networks.</title>
        <authorList>
            <person name="Olsen J.V."/>
            <person name="Blagoev B."/>
            <person name="Gnad F."/>
            <person name="Macek B."/>
            <person name="Kumar C."/>
            <person name="Mortensen P."/>
            <person name="Mann M."/>
        </authorList>
    </citation>
    <scope>IDENTIFICATION BY MASS SPECTROMETRY [LARGE SCALE ANALYSIS]</scope>
    <source>
        <tissue>Cervix carcinoma</tissue>
    </source>
</reference>
<reference key="8">
    <citation type="journal article" date="2008" name="Proc. Natl. Acad. Sci. U.S.A.">
        <title>A quantitative atlas of mitotic phosphorylation.</title>
        <authorList>
            <person name="Dephoure N."/>
            <person name="Zhou C."/>
            <person name="Villen J."/>
            <person name="Beausoleil S.A."/>
            <person name="Bakalarski C.E."/>
            <person name="Elledge S.J."/>
            <person name="Gygi S.P."/>
        </authorList>
    </citation>
    <scope>PHOSPHORYLATION [LARGE SCALE ANALYSIS] AT SER-75; THR-79; THR-475; SER-540; SER-541; SER-544; SER-546; SER-578; SER-648; SER-650 AND SER-784</scope>
    <scope>IDENTIFICATION BY MASS SPECTROMETRY [LARGE SCALE ANALYSIS]</scope>
    <source>
        <tissue>Cervix carcinoma</tissue>
    </source>
</reference>
<reference key="9">
    <citation type="journal article" date="2010" name="Sci. Signal.">
        <title>Quantitative phosphoproteomics reveals widespread full phosphorylation site occupancy during mitosis.</title>
        <authorList>
            <person name="Olsen J.V."/>
            <person name="Vermeulen M."/>
            <person name="Santamaria A."/>
            <person name="Kumar C."/>
            <person name="Miller M.L."/>
            <person name="Jensen L.J."/>
            <person name="Gnad F."/>
            <person name="Cox J."/>
            <person name="Jensen T.S."/>
            <person name="Nigg E.A."/>
            <person name="Brunak S."/>
            <person name="Mann M."/>
        </authorList>
    </citation>
    <scope>PHOSPHORYLATION [LARGE SCALE ANALYSIS] AT SER-75; SER-430; SER-510; SER-544; SER-546; SER-564 AND SER-650</scope>
    <scope>IDENTIFICATION BY MASS SPECTROMETRY [LARGE SCALE ANALYSIS]</scope>
    <source>
        <tissue>Cervix carcinoma</tissue>
    </source>
</reference>
<reference key="10">
    <citation type="journal article" date="2012" name="Proc. Natl. Acad. Sci. U.S.A.">
        <title>N-terminal acetylome analyses and functional insights of the N-terminal acetyltransferase NatB.</title>
        <authorList>
            <person name="Van Damme P."/>
            <person name="Lasa M."/>
            <person name="Polevoda B."/>
            <person name="Gazquez C."/>
            <person name="Elosegui-Artola A."/>
            <person name="Kim D.S."/>
            <person name="De Juan-Pardo E."/>
            <person name="Demeyer K."/>
            <person name="Hole K."/>
            <person name="Larrea E."/>
            <person name="Timmerman E."/>
            <person name="Prieto J."/>
            <person name="Arnesen T."/>
            <person name="Sherman F."/>
            <person name="Gevaert K."/>
            <person name="Aldabe R."/>
        </authorList>
    </citation>
    <scope>ACETYLATION [LARGE SCALE ANALYSIS] AT MET-1 (ISOFORMS 2 AND 3)</scope>
    <scope>IDENTIFICATION BY MASS SPECTROMETRY [LARGE SCALE ANALYSIS]</scope>
</reference>
<reference key="11">
    <citation type="journal article" date="2013" name="J. Proteome Res.">
        <title>Toward a comprehensive characterization of a human cancer cell phosphoproteome.</title>
        <authorList>
            <person name="Zhou H."/>
            <person name="Di Palma S."/>
            <person name="Preisinger C."/>
            <person name="Peng M."/>
            <person name="Polat A.N."/>
            <person name="Heck A.J."/>
            <person name="Mohammed S."/>
        </authorList>
    </citation>
    <scope>PHOSPHORYLATION [LARGE SCALE ANALYSIS] AT SER-75; THR-79; SER-378; SER-430; SER-437; THR-475; SER-510; SER-544; SER-546; THR-550; SER-648; SER-650; SER-678 AND SER-784</scope>
    <scope>IDENTIFICATION BY MASS SPECTROMETRY [LARGE SCALE ANALYSIS]</scope>
    <source>
        <tissue>Cervix carcinoma</tissue>
        <tissue>Erythroleukemia</tissue>
    </source>
</reference>
<reference key="12">
    <citation type="journal article" date="2014" name="J. Proteomics">
        <title>An enzyme assisted RP-RPLC approach for in-depth analysis of human liver phosphoproteome.</title>
        <authorList>
            <person name="Bian Y."/>
            <person name="Song C."/>
            <person name="Cheng K."/>
            <person name="Dong M."/>
            <person name="Wang F."/>
            <person name="Huang J."/>
            <person name="Sun D."/>
            <person name="Wang L."/>
            <person name="Ye M."/>
            <person name="Zou H."/>
        </authorList>
    </citation>
    <scope>PHOSPHORYLATION [LARGE SCALE ANALYSIS] AT SER-461 AND SER-578</scope>
    <scope>IDENTIFICATION BY MASS SPECTROMETRY [LARGE SCALE ANALYSIS]</scope>
    <source>
        <tissue>Liver</tissue>
    </source>
</reference>
<reference key="13">
    <citation type="journal article" date="2014" name="Mol. Cell. Proteomics">
        <title>Immunoaffinity enrichment and mass spectrometry analysis of protein methylation.</title>
        <authorList>
            <person name="Guo A."/>
            <person name="Gu H."/>
            <person name="Zhou J."/>
            <person name="Mulhern D."/>
            <person name="Wang Y."/>
            <person name="Lee K.A."/>
            <person name="Yang V."/>
            <person name="Aguiar M."/>
            <person name="Kornhauser J."/>
            <person name="Jia X."/>
            <person name="Ren J."/>
            <person name="Beausoleil S.A."/>
            <person name="Silva J.C."/>
            <person name="Vemulapalli V."/>
            <person name="Bedford M.T."/>
            <person name="Comb M.J."/>
        </authorList>
    </citation>
    <scope>IDENTIFICATION BY MASS SPECTROMETRY [LARGE SCALE ANALYSIS]</scope>
    <source>
        <tissue>Colon carcinoma</tissue>
    </source>
</reference>
<reference key="14">
    <citation type="journal article" date="2011" name="Am. J. Hum. Genet.">
        <title>Excess of de novo deleterious mutations in genes associated with glutamatergic systems in nonsyndromic intellectual disability.</title>
        <authorList>
            <person name="Hamdan F.F."/>
            <person name="Gauthier J."/>
            <person name="Araki Y."/>
            <person name="Lin D.T."/>
            <person name="Yoshizawa Y."/>
            <person name="Higashi K."/>
            <person name="Park A.R."/>
            <person name="Spiegelman D."/>
            <person name="Dobrzeniecka S."/>
            <person name="Piton A."/>
            <person name="Tomitori H."/>
            <person name="Daoud H."/>
            <person name="Massicotte C."/>
            <person name="Henrion E."/>
            <person name="Diallo O."/>
            <person name="Shekarabi M."/>
            <person name="Marineau C."/>
            <person name="Shevell M."/>
            <person name="Maranda B."/>
            <person name="Mitchell G."/>
            <person name="Nadeau A."/>
            <person name="D'Anjou G."/>
            <person name="Vanasse M."/>
            <person name="Srour M."/>
            <person name="Lafreniere R.G."/>
            <person name="Drapeau P."/>
            <person name="Lacaille J.C."/>
            <person name="Kim E."/>
            <person name="Lee J.R."/>
            <person name="Igarashi K."/>
            <person name="Huganir R.L."/>
            <person name="Rouleau G.A."/>
            <person name="Michaud J.L."/>
        </authorList>
    </citation>
    <scope>VARIANT MRD11 SER-854</scope>
    <scope>CHARACTERIZATION OF VARIANT MRD11 SER-854</scope>
</reference>